<organism>
    <name type="scientific">Haemophilus influenzae (strain ATCC 51907 / DSM 11121 / KW20 / Rd)</name>
    <dbReference type="NCBI Taxonomy" id="71421"/>
    <lineage>
        <taxon>Bacteria</taxon>
        <taxon>Pseudomonadati</taxon>
        <taxon>Pseudomonadota</taxon>
        <taxon>Gammaproteobacteria</taxon>
        <taxon>Pasteurellales</taxon>
        <taxon>Pasteurellaceae</taxon>
        <taxon>Haemophilus</taxon>
    </lineage>
</organism>
<feature type="chain" id="PRO_0000129143" description="Tol-Pal system protein TolR">
    <location>
        <begin position="1"/>
        <end position="139"/>
    </location>
</feature>
<feature type="transmembrane region" description="Helical" evidence="1">
    <location>
        <begin position="15"/>
        <end position="35"/>
    </location>
</feature>
<feature type="strand" evidence="3">
    <location>
        <begin position="61"/>
        <end position="65"/>
    </location>
</feature>
<feature type="strand" evidence="3">
    <location>
        <begin position="67"/>
        <end position="69"/>
    </location>
</feature>
<feature type="strand" evidence="3">
    <location>
        <begin position="71"/>
        <end position="75"/>
    </location>
</feature>
<feature type="strand" evidence="3">
    <location>
        <begin position="78"/>
        <end position="83"/>
    </location>
</feature>
<feature type="helix" evidence="3">
    <location>
        <begin position="85"/>
        <end position="98"/>
    </location>
</feature>
<feature type="strand" evidence="3">
    <location>
        <begin position="104"/>
        <end position="108"/>
    </location>
</feature>
<feature type="helix" evidence="3">
    <location>
        <begin position="114"/>
        <end position="126"/>
    </location>
</feature>
<proteinExistence type="evidence at protein level"/>
<gene>
    <name evidence="1" type="primary">tolR</name>
    <name type="ordered locus">HI_0384</name>
</gene>
<sequence>MARRQRKAIKSEINIVPFLDVLLVLVLIFMATAPIISQSVQVELPDSVQSQEVSNEDKVPVILEVAGIGKYAISIGGERQEGLTEEMVTQLSRQEFDKDNNTLFLVGGAKEVPYEEVIKALNLLHLAGIKSVGLMTNPI</sequence>
<dbReference type="EMBL" id="L42023">
    <property type="protein sequence ID" value="AAC22042.1"/>
    <property type="molecule type" value="Genomic_DNA"/>
</dbReference>
<dbReference type="EMBL" id="U32470">
    <property type="protein sequence ID" value="AAC44595.1"/>
    <property type="molecule type" value="Genomic_DNA"/>
</dbReference>
<dbReference type="PIR" id="H64064">
    <property type="entry name" value="H64064"/>
</dbReference>
<dbReference type="RefSeq" id="NP_438545.1">
    <property type="nucleotide sequence ID" value="NC_000907.1"/>
</dbReference>
<dbReference type="PDB" id="2JWK">
    <property type="method" value="NMR"/>
    <property type="chains" value="A/B=59-130"/>
</dbReference>
<dbReference type="PDB" id="2JWL">
    <property type="method" value="NMR"/>
    <property type="chains" value="A/B=59-130"/>
</dbReference>
<dbReference type="PDBsum" id="2JWK"/>
<dbReference type="PDBsum" id="2JWL"/>
<dbReference type="BMRB" id="P43769"/>
<dbReference type="SMR" id="P43769"/>
<dbReference type="STRING" id="71421.HI_0384"/>
<dbReference type="EnsemblBacteria" id="AAC22042">
    <property type="protein sequence ID" value="AAC22042"/>
    <property type="gene ID" value="HI_0384"/>
</dbReference>
<dbReference type="KEGG" id="hin:HI_0384"/>
<dbReference type="PATRIC" id="fig|71421.8.peg.402"/>
<dbReference type="eggNOG" id="COG0848">
    <property type="taxonomic scope" value="Bacteria"/>
</dbReference>
<dbReference type="HOGENOM" id="CLU_085305_1_3_6"/>
<dbReference type="OrthoDB" id="9798629at2"/>
<dbReference type="PhylomeDB" id="P43769"/>
<dbReference type="BioCyc" id="HINF71421:G1GJ1-399-MONOMER"/>
<dbReference type="EvolutionaryTrace" id="P43769"/>
<dbReference type="Proteomes" id="UP000000579">
    <property type="component" value="Chromosome"/>
</dbReference>
<dbReference type="GO" id="GO:0005886">
    <property type="term" value="C:plasma membrane"/>
    <property type="evidence" value="ECO:0000318"/>
    <property type="project" value="GO_Central"/>
</dbReference>
<dbReference type="GO" id="GO:0022857">
    <property type="term" value="F:transmembrane transporter activity"/>
    <property type="evidence" value="ECO:0007669"/>
    <property type="project" value="InterPro"/>
</dbReference>
<dbReference type="GO" id="GO:0051301">
    <property type="term" value="P:cell division"/>
    <property type="evidence" value="ECO:0007669"/>
    <property type="project" value="UniProtKB-UniRule"/>
</dbReference>
<dbReference type="GO" id="GO:0015031">
    <property type="term" value="P:protein transport"/>
    <property type="evidence" value="ECO:0007669"/>
    <property type="project" value="InterPro"/>
</dbReference>
<dbReference type="Gene3D" id="3.30.420.270">
    <property type="match status" value="1"/>
</dbReference>
<dbReference type="HAMAP" id="MF_02203">
    <property type="entry name" value="TolR"/>
    <property type="match status" value="1"/>
</dbReference>
<dbReference type="InterPro" id="IPR003400">
    <property type="entry name" value="ExbD"/>
</dbReference>
<dbReference type="InterPro" id="IPR014168">
    <property type="entry name" value="Tol-Pal_TolR"/>
</dbReference>
<dbReference type="NCBIfam" id="NF008248">
    <property type="entry name" value="PRK11024.1"/>
    <property type="match status" value="1"/>
</dbReference>
<dbReference type="PANTHER" id="PTHR30558">
    <property type="entry name" value="EXBD MEMBRANE COMPONENT OF PMF-DRIVEN MACROMOLECULE IMPORT SYSTEM"/>
    <property type="match status" value="1"/>
</dbReference>
<dbReference type="PANTHER" id="PTHR30558:SF7">
    <property type="entry name" value="TOL-PAL SYSTEM PROTEIN TOLR"/>
    <property type="match status" value="1"/>
</dbReference>
<dbReference type="Pfam" id="PF02472">
    <property type="entry name" value="ExbD"/>
    <property type="match status" value="1"/>
</dbReference>
<accession>P43769</accession>
<comment type="function">
    <text evidence="1">Part of the Tol-Pal system, which plays a role in outer membrane invagination during cell division and is important for maintaining outer membrane integrity.</text>
</comment>
<comment type="subunit">
    <text evidence="1">The Tol-Pal system is composed of five core proteins: the inner membrane proteins TolA, TolQ and TolR, the periplasmic protein TolB and the outer membrane protein Pal. They form a network linking the inner and outer membranes and the peptidoglycan layer.</text>
</comment>
<comment type="subcellular location">
    <subcellularLocation>
        <location evidence="1">Cell inner membrane</location>
        <topology evidence="1">Single-pass membrane protein</topology>
    </subcellularLocation>
</comment>
<comment type="similarity">
    <text evidence="1 2">Belongs to the ExbD/TolR family.</text>
</comment>
<keyword id="KW-0002">3D-structure</keyword>
<keyword id="KW-0131">Cell cycle</keyword>
<keyword id="KW-0132">Cell division</keyword>
<keyword id="KW-0997">Cell inner membrane</keyword>
<keyword id="KW-1003">Cell membrane</keyword>
<keyword id="KW-0472">Membrane</keyword>
<keyword id="KW-1185">Reference proteome</keyword>
<keyword id="KW-0812">Transmembrane</keyword>
<keyword id="KW-1133">Transmembrane helix</keyword>
<protein>
    <recommendedName>
        <fullName evidence="1">Tol-Pal system protein TolR</fullName>
    </recommendedName>
</protein>
<reference key="1">
    <citation type="journal article" date="1995" name="Science">
        <title>Whole-genome random sequencing and assembly of Haemophilus influenzae Rd.</title>
        <authorList>
            <person name="Fleischmann R.D."/>
            <person name="Adams M.D."/>
            <person name="White O."/>
            <person name="Clayton R.A."/>
            <person name="Kirkness E.F."/>
            <person name="Kerlavage A.R."/>
            <person name="Bult C.J."/>
            <person name="Tomb J.-F."/>
            <person name="Dougherty B.A."/>
            <person name="Merrick J.M."/>
            <person name="McKenney K."/>
            <person name="Sutton G.G."/>
            <person name="FitzHugh W."/>
            <person name="Fields C.A."/>
            <person name="Gocayne J.D."/>
            <person name="Scott J.D."/>
            <person name="Shirley R."/>
            <person name="Liu L.-I."/>
            <person name="Glodek A."/>
            <person name="Kelley J.M."/>
            <person name="Weidman J.F."/>
            <person name="Phillips C.A."/>
            <person name="Spriggs T."/>
            <person name="Hedblom E."/>
            <person name="Cotton M.D."/>
            <person name="Utterback T.R."/>
            <person name="Hanna M.C."/>
            <person name="Nguyen D.T."/>
            <person name="Saudek D.M."/>
            <person name="Brandon R.C."/>
            <person name="Fine L.D."/>
            <person name="Fritchman J.L."/>
            <person name="Fuhrmann J.L."/>
            <person name="Geoghagen N.S.M."/>
            <person name="Gnehm C.L."/>
            <person name="McDonald L.A."/>
            <person name="Small K.V."/>
            <person name="Fraser C.M."/>
            <person name="Smith H.O."/>
            <person name="Venter J.C."/>
        </authorList>
    </citation>
    <scope>NUCLEOTIDE SEQUENCE [LARGE SCALE GENOMIC DNA]</scope>
    <source>
        <strain>ATCC 51907 / DSM 11121 / KW20 / Rd</strain>
    </source>
</reference>
<reference key="2">
    <citation type="journal article" date="1996" name="Gene">
        <title>Isolation and characterization of the Haemophilus influenzae tolQ, tolR, tolA and tolB genes.</title>
        <authorList>
            <person name="Sen K."/>
            <person name="Sikkema D.J."/>
            <person name="Murphy T.F."/>
        </authorList>
    </citation>
    <scope>NUCLEOTIDE SEQUENCE [GENOMIC DNA]</scope>
    <source>
        <strain>1479</strain>
    </source>
</reference>
<name>TOLR_HAEIN</name>
<evidence type="ECO:0000255" key="1">
    <source>
        <dbReference type="HAMAP-Rule" id="MF_02203"/>
    </source>
</evidence>
<evidence type="ECO:0000305" key="2"/>
<evidence type="ECO:0007829" key="3">
    <source>
        <dbReference type="PDB" id="2JWK"/>
    </source>
</evidence>